<dbReference type="EC" id="5.3.1.4" evidence="1"/>
<dbReference type="EMBL" id="CP000916">
    <property type="protein sequence ID" value="ACM22585.1"/>
    <property type="molecule type" value="Genomic_DNA"/>
</dbReference>
<dbReference type="RefSeq" id="WP_015918904.1">
    <property type="nucleotide sequence ID" value="NC_011978.1"/>
</dbReference>
<dbReference type="SMR" id="B9KC39"/>
<dbReference type="STRING" id="309803.CTN_0409"/>
<dbReference type="KEGG" id="tna:CTN_0409"/>
<dbReference type="eggNOG" id="COG2160">
    <property type="taxonomic scope" value="Bacteria"/>
</dbReference>
<dbReference type="HOGENOM" id="CLU_045663_0_0_0"/>
<dbReference type="UniPathway" id="UPA00145">
    <property type="reaction ID" value="UER00565"/>
</dbReference>
<dbReference type="Proteomes" id="UP000000445">
    <property type="component" value="Chromosome"/>
</dbReference>
<dbReference type="GO" id="GO:0005829">
    <property type="term" value="C:cytosol"/>
    <property type="evidence" value="ECO:0007669"/>
    <property type="project" value="TreeGrafter"/>
</dbReference>
<dbReference type="GO" id="GO:0008733">
    <property type="term" value="F:L-arabinose isomerase activity"/>
    <property type="evidence" value="ECO:0007669"/>
    <property type="project" value="UniProtKB-UniRule"/>
</dbReference>
<dbReference type="GO" id="GO:0030145">
    <property type="term" value="F:manganese ion binding"/>
    <property type="evidence" value="ECO:0007669"/>
    <property type="project" value="UniProtKB-UniRule"/>
</dbReference>
<dbReference type="GO" id="GO:0019569">
    <property type="term" value="P:L-arabinose catabolic process to xylulose 5-phosphate"/>
    <property type="evidence" value="ECO:0007669"/>
    <property type="project" value="UniProtKB-UniRule"/>
</dbReference>
<dbReference type="CDD" id="cd03557">
    <property type="entry name" value="L-arabinose_isomerase"/>
    <property type="match status" value="1"/>
</dbReference>
<dbReference type="Gene3D" id="3.40.50.10940">
    <property type="match status" value="1"/>
</dbReference>
<dbReference type="HAMAP" id="MF_00519">
    <property type="entry name" value="Arabinose_Isome"/>
    <property type="match status" value="1"/>
</dbReference>
<dbReference type="InterPro" id="IPR024664">
    <property type="entry name" value="Ara_Isoase_C"/>
</dbReference>
<dbReference type="InterPro" id="IPR055390">
    <property type="entry name" value="AraA_central"/>
</dbReference>
<dbReference type="InterPro" id="IPR055389">
    <property type="entry name" value="AraA_N"/>
</dbReference>
<dbReference type="InterPro" id="IPR038583">
    <property type="entry name" value="AraA_N_sf"/>
</dbReference>
<dbReference type="InterPro" id="IPR004216">
    <property type="entry name" value="Fuc/Ara_isomerase_C"/>
</dbReference>
<dbReference type="InterPro" id="IPR009015">
    <property type="entry name" value="Fucose_isomerase_N/cen_sf"/>
</dbReference>
<dbReference type="InterPro" id="IPR003762">
    <property type="entry name" value="Lara_isomerase"/>
</dbReference>
<dbReference type="NCBIfam" id="NF002795">
    <property type="entry name" value="PRK02929.1"/>
    <property type="match status" value="1"/>
</dbReference>
<dbReference type="PANTHER" id="PTHR38464">
    <property type="entry name" value="L-ARABINOSE ISOMERASE"/>
    <property type="match status" value="1"/>
</dbReference>
<dbReference type="PANTHER" id="PTHR38464:SF1">
    <property type="entry name" value="L-ARABINOSE ISOMERASE"/>
    <property type="match status" value="1"/>
</dbReference>
<dbReference type="Pfam" id="PF24856">
    <property type="entry name" value="AraA_central"/>
    <property type="match status" value="1"/>
</dbReference>
<dbReference type="Pfam" id="PF02610">
    <property type="entry name" value="AraA_N"/>
    <property type="match status" value="1"/>
</dbReference>
<dbReference type="Pfam" id="PF11762">
    <property type="entry name" value="Arabinose_Iso_C"/>
    <property type="match status" value="1"/>
</dbReference>
<dbReference type="PIRSF" id="PIRSF001478">
    <property type="entry name" value="L-ara_isomerase"/>
    <property type="match status" value="1"/>
</dbReference>
<dbReference type="SUPFAM" id="SSF50443">
    <property type="entry name" value="FucI/AraA C-terminal domain-like"/>
    <property type="match status" value="1"/>
</dbReference>
<dbReference type="SUPFAM" id="SSF53743">
    <property type="entry name" value="FucI/AraA N-terminal and middle domains"/>
    <property type="match status" value="1"/>
</dbReference>
<proteinExistence type="inferred from homology"/>
<protein>
    <recommendedName>
        <fullName evidence="1">L-arabinose isomerase</fullName>
        <ecNumber evidence="1">5.3.1.4</ecNumber>
    </recommendedName>
</protein>
<organism>
    <name type="scientific">Thermotoga neapolitana (strain ATCC 49049 / DSM 4359 / NBRC 107923 / NS-E)</name>
    <dbReference type="NCBI Taxonomy" id="309803"/>
    <lineage>
        <taxon>Bacteria</taxon>
        <taxon>Thermotogati</taxon>
        <taxon>Thermotogota</taxon>
        <taxon>Thermotogae</taxon>
        <taxon>Thermotogales</taxon>
        <taxon>Thermotogaceae</taxon>
        <taxon>Thermotoga</taxon>
    </lineage>
</organism>
<reference key="1">
    <citation type="submission" date="2007-11" db="EMBL/GenBank/DDBJ databases">
        <title>The genome sequence of the hyperthermophilic bacterium Thermotoga neapolitana.</title>
        <authorList>
            <person name="Lim S.K."/>
            <person name="Kim J.S."/>
            <person name="Cha S.H."/>
            <person name="Park B.C."/>
            <person name="Lee D.S."/>
            <person name="Tae H.S."/>
            <person name="Kim S.-J."/>
            <person name="Kim J.J."/>
            <person name="Park K.J."/>
            <person name="Lee S.Y."/>
        </authorList>
    </citation>
    <scope>NUCLEOTIDE SEQUENCE [LARGE SCALE GENOMIC DNA]</scope>
    <source>
        <strain>ATCC 49049 / DSM 4359 / NBRC 107923 / NS-E</strain>
    </source>
</reference>
<feature type="chain" id="PRO_1000189551" description="L-arabinose isomerase">
    <location>
        <begin position="1"/>
        <end position="496"/>
    </location>
</feature>
<feature type="binding site" evidence="1">
    <location>
        <position position="302"/>
    </location>
    <ligand>
        <name>Mn(2+)</name>
        <dbReference type="ChEBI" id="CHEBI:29035"/>
    </ligand>
</feature>
<feature type="binding site" evidence="1">
    <location>
        <position position="329"/>
    </location>
    <ligand>
        <name>Mn(2+)</name>
        <dbReference type="ChEBI" id="CHEBI:29035"/>
    </ligand>
</feature>
<feature type="binding site" evidence="1">
    <location>
        <position position="346"/>
    </location>
    <ligand>
        <name>Mn(2+)</name>
        <dbReference type="ChEBI" id="CHEBI:29035"/>
    </ligand>
</feature>
<feature type="binding site" evidence="1">
    <location>
        <position position="445"/>
    </location>
    <ligand>
        <name>Mn(2+)</name>
        <dbReference type="ChEBI" id="CHEBI:29035"/>
    </ligand>
</feature>
<sequence>MIDLKQYEFWFLVGSQYLYGLETLKKVEQQASRIVEALNNDPIFPSKIVLKPVLKNSAEIREIFEKANAEPKCAGVIVWMHTFSPSKMWIRGLSINKKPLLHLHTQYNREIPWDTIDMDYMNLNQSAHGDREHGFIHARMRLPRKVVVGHWEDREVREKIAKWMRVACAIQDGRTGQIVRFGDNMREVASTEGDKVEAQIKLGWSINTWGVGELAERVKAVPENEVEELLKEYKERYIMPEDEYSLKAIREQAKMEIALREFLKEKNAIAFTTTFEDLHDLPQLPGLAVQRLMEEGYGFGAEGDWKAAGLVRALKVMGAGLPGGTSFMEDYTYHLTPGNELVLGAHMLEVCPTIAKEKPRIEVHPLSIGGKADPARLVFDGQEGPAVNASIVDMGNRFRLVVNRVLSVPIERKMPKLPTARVLWKPLPDFKRATTAWILAGGSHHTAFSTAVDVEYLIDWAEALEIEYLVIDENLDLENFKKELRWNELYWGLLKR</sequence>
<comment type="function">
    <text evidence="1">Catalyzes the conversion of L-arabinose to L-ribulose.</text>
</comment>
<comment type="catalytic activity">
    <reaction evidence="1">
        <text>beta-L-arabinopyranose = L-ribulose</text>
        <dbReference type="Rhea" id="RHEA:14821"/>
        <dbReference type="ChEBI" id="CHEBI:16880"/>
        <dbReference type="ChEBI" id="CHEBI:40886"/>
        <dbReference type="EC" id="5.3.1.4"/>
    </reaction>
</comment>
<comment type="cofactor">
    <cofactor evidence="1">
        <name>Mn(2+)</name>
        <dbReference type="ChEBI" id="CHEBI:29035"/>
    </cofactor>
    <text evidence="1">Binds 1 Mn(2+) ion per subunit.</text>
</comment>
<comment type="pathway">
    <text evidence="1">Carbohydrate degradation; L-arabinose degradation via L-ribulose; D-xylulose 5-phosphate from L-arabinose (bacterial route): step 1/3.</text>
</comment>
<comment type="similarity">
    <text evidence="1">Belongs to the arabinose isomerase family.</text>
</comment>
<gene>
    <name evidence="1" type="primary">araA</name>
    <name type="ordered locus">CTN_0409</name>
</gene>
<evidence type="ECO:0000255" key="1">
    <source>
        <dbReference type="HAMAP-Rule" id="MF_00519"/>
    </source>
</evidence>
<keyword id="KW-0054">Arabinose catabolism</keyword>
<keyword id="KW-0119">Carbohydrate metabolism</keyword>
<keyword id="KW-0413">Isomerase</keyword>
<keyword id="KW-0464">Manganese</keyword>
<keyword id="KW-0479">Metal-binding</keyword>
<name>ARAA_THENN</name>
<accession>B9KC39</accession>